<proteinExistence type="inferred from homology"/>
<name>LIGC2_MYCS2</name>
<keyword id="KW-0067">ATP-binding</keyword>
<keyword id="KW-0436">Ligase</keyword>
<keyword id="KW-0547">Nucleotide-binding</keyword>
<keyword id="KW-1185">Reference proteome</keyword>
<accession>A0R5T3</accession>
<feature type="chain" id="PRO_0000425952" description="DNA ligase C2">
    <location>
        <begin position="1"/>
        <end position="354"/>
    </location>
</feature>
<feature type="active site" description="N6-AMP-lysine intermediate" evidence="1">
    <location>
        <position position="29"/>
    </location>
</feature>
<gene>
    <name type="primary">ligC2</name>
    <name type="ordered locus">MSMEG_6304</name>
    <name type="ordered locus">MSMEI_6138</name>
</gene>
<protein>
    <recommendedName>
        <fullName>DNA ligase C2</fullName>
        <ecNumber>6.5.1.1</ecNumber>
    </recommendedName>
    <alternativeName>
        <fullName>Polydeoxyribonucleotide synthase [ATP]</fullName>
    </alternativeName>
</protein>
<comment type="function">
    <text evidence="1 3">DNA ligase that seals nicks in double-stranded DNA during DNA replication, DNA recombination and DNA repair (By similarity). Has weak intrinsic nick joining activities and accumulates DNA-adenylate. Acts as a backup for LigD in the Ku-LigD-dependent NHEJ pathway.</text>
</comment>
<comment type="catalytic activity">
    <reaction>
        <text>ATP + (deoxyribonucleotide)n-3'-hydroxyl + 5'-phospho-(deoxyribonucleotide)m = (deoxyribonucleotide)n+m + AMP + diphosphate.</text>
        <dbReference type="EC" id="6.5.1.1"/>
    </reaction>
</comment>
<comment type="disruption phenotype">
    <text evidence="2 3">Not essential; a double ligC1-ligC2 mutant grows normally, no effect on NHEJ. In a triple deletion with ligD NHEJ on blunt-ended plasmid is 90-fold impaired. In quadruple ligB-ligC1-ligC2-ligD deletions NHEJ on blunt and 5'-overhangs is 0.22 and 0.12% of wild-type respectively; only 4-fold decrease in 3'-overhang NHEJ.</text>
</comment>
<comment type="similarity">
    <text evidence="4">Belongs to the ATP-dependent DNA ligase family.</text>
</comment>
<evidence type="ECO:0000250" key="1"/>
<evidence type="ECO:0000269" key="2">
    <source>
    </source>
</evidence>
<evidence type="ECO:0000269" key="3">
    <source>
    </source>
</evidence>
<evidence type="ECO:0000305" key="4"/>
<sequence>MDLPVLPPVSPMLSKSVNQIPPGMSYEPKWDGFRSILFRDGAEVELGSRKERPMTRYFPELVAAALTELPDRCVIDGEIVLPADNHLDFEALQLRLHPAASRVAMLAEQTPAAFIAFDLLALGDDDYTGRPFSERRAALETALADAGPTFHLTPATTDLPTAQRWFHEFEGAGLDGVIAKPLDLTYQPDKRVMFKVKHQRTADCVVAGYRLHKSGADAVGSLLLGLYDDDGSLASVGVIGAFPMATRRALFTELQTLVADFDHHPWNWAAQAAADPELARRYGGGSRWNAGKDLSFVPLRPERLVEVRYDHMEGRRFRHTAQFNRWRPDRDARSCTFAQLDSPPHSSSVTSCRV</sequence>
<dbReference type="EC" id="6.5.1.1"/>
<dbReference type="EMBL" id="CP000480">
    <property type="protein sequence ID" value="ABK75022.1"/>
    <property type="molecule type" value="Genomic_DNA"/>
</dbReference>
<dbReference type="EMBL" id="CP001663">
    <property type="protein sequence ID" value="AFP42568.1"/>
    <property type="molecule type" value="Genomic_DNA"/>
</dbReference>
<dbReference type="RefSeq" id="YP_890521.1">
    <property type="nucleotide sequence ID" value="NC_008596.1"/>
</dbReference>
<dbReference type="SMR" id="A0R5T3"/>
<dbReference type="STRING" id="246196.MSMEG_6304"/>
<dbReference type="PaxDb" id="246196-MSMEI_6138"/>
<dbReference type="KEGG" id="msb:LJ00_31160"/>
<dbReference type="KEGG" id="msg:MSMEI_6138"/>
<dbReference type="KEGG" id="msm:MSMEG_6304"/>
<dbReference type="PATRIC" id="fig|246196.19.peg.6139"/>
<dbReference type="eggNOG" id="COG1793">
    <property type="taxonomic scope" value="Bacteria"/>
</dbReference>
<dbReference type="OrthoDB" id="9770771at2"/>
<dbReference type="Proteomes" id="UP000000757">
    <property type="component" value="Chromosome"/>
</dbReference>
<dbReference type="Proteomes" id="UP000006158">
    <property type="component" value="Chromosome"/>
</dbReference>
<dbReference type="GO" id="GO:0005524">
    <property type="term" value="F:ATP binding"/>
    <property type="evidence" value="ECO:0007669"/>
    <property type="project" value="UniProtKB-KW"/>
</dbReference>
<dbReference type="GO" id="GO:0003910">
    <property type="term" value="F:DNA ligase (ATP) activity"/>
    <property type="evidence" value="ECO:0007669"/>
    <property type="project" value="UniProtKB-EC"/>
</dbReference>
<dbReference type="GO" id="GO:0006310">
    <property type="term" value="P:DNA recombination"/>
    <property type="evidence" value="ECO:0007669"/>
    <property type="project" value="InterPro"/>
</dbReference>
<dbReference type="GO" id="GO:0006281">
    <property type="term" value="P:DNA repair"/>
    <property type="evidence" value="ECO:0007669"/>
    <property type="project" value="InterPro"/>
</dbReference>
<dbReference type="CDD" id="cd07905">
    <property type="entry name" value="Adenylation_DNA_ligase_LigC"/>
    <property type="match status" value="1"/>
</dbReference>
<dbReference type="CDD" id="cd07970">
    <property type="entry name" value="OBF_DNA_ligase_LigC"/>
    <property type="match status" value="1"/>
</dbReference>
<dbReference type="Gene3D" id="3.30.470.30">
    <property type="entry name" value="DNA ligase/mRNA capping enzyme"/>
    <property type="match status" value="1"/>
</dbReference>
<dbReference type="Gene3D" id="2.40.50.140">
    <property type="entry name" value="Nucleic acid-binding proteins"/>
    <property type="match status" value="1"/>
</dbReference>
<dbReference type="InterPro" id="IPR044119">
    <property type="entry name" value="Adenylation_LigC-like"/>
</dbReference>
<dbReference type="InterPro" id="IPR050191">
    <property type="entry name" value="ATP-dep_DNA_ligase"/>
</dbReference>
<dbReference type="InterPro" id="IPR012309">
    <property type="entry name" value="DNA_ligase_ATP-dep_C"/>
</dbReference>
<dbReference type="InterPro" id="IPR012310">
    <property type="entry name" value="DNA_ligase_ATP-dep_cent"/>
</dbReference>
<dbReference type="InterPro" id="IPR012340">
    <property type="entry name" value="NA-bd_OB-fold"/>
</dbReference>
<dbReference type="InterPro" id="IPR044117">
    <property type="entry name" value="OBF_LigC-like"/>
</dbReference>
<dbReference type="NCBIfam" id="NF006078">
    <property type="entry name" value="PRK08224.1"/>
    <property type="match status" value="1"/>
</dbReference>
<dbReference type="PANTHER" id="PTHR45674:SF4">
    <property type="entry name" value="DNA LIGASE 1"/>
    <property type="match status" value="1"/>
</dbReference>
<dbReference type="PANTHER" id="PTHR45674">
    <property type="entry name" value="DNA LIGASE 1/3 FAMILY MEMBER"/>
    <property type="match status" value="1"/>
</dbReference>
<dbReference type="Pfam" id="PF04679">
    <property type="entry name" value="DNA_ligase_A_C"/>
    <property type="match status" value="1"/>
</dbReference>
<dbReference type="Pfam" id="PF01068">
    <property type="entry name" value="DNA_ligase_A_M"/>
    <property type="match status" value="1"/>
</dbReference>
<dbReference type="SUPFAM" id="SSF56091">
    <property type="entry name" value="DNA ligase/mRNA capping enzyme, catalytic domain"/>
    <property type="match status" value="1"/>
</dbReference>
<dbReference type="SUPFAM" id="SSF50249">
    <property type="entry name" value="Nucleic acid-binding proteins"/>
    <property type="match status" value="1"/>
</dbReference>
<dbReference type="PROSITE" id="PS50160">
    <property type="entry name" value="DNA_LIGASE_A3"/>
    <property type="match status" value="1"/>
</dbReference>
<organism>
    <name type="scientific">Mycolicibacterium smegmatis (strain ATCC 700084 / mc(2)155)</name>
    <name type="common">Mycobacterium smegmatis</name>
    <dbReference type="NCBI Taxonomy" id="246196"/>
    <lineage>
        <taxon>Bacteria</taxon>
        <taxon>Bacillati</taxon>
        <taxon>Actinomycetota</taxon>
        <taxon>Actinomycetes</taxon>
        <taxon>Mycobacteriales</taxon>
        <taxon>Mycobacteriaceae</taxon>
        <taxon>Mycolicibacterium</taxon>
    </lineage>
</organism>
<reference key="1">
    <citation type="submission" date="2006-10" db="EMBL/GenBank/DDBJ databases">
        <authorList>
            <person name="Fleischmann R.D."/>
            <person name="Dodson R.J."/>
            <person name="Haft D.H."/>
            <person name="Merkel J.S."/>
            <person name="Nelson W.C."/>
            <person name="Fraser C.M."/>
        </authorList>
    </citation>
    <scope>NUCLEOTIDE SEQUENCE [LARGE SCALE GENOMIC DNA]</scope>
    <source>
        <strain>ATCC 700084 / mc(2)155</strain>
    </source>
</reference>
<reference key="2">
    <citation type="journal article" date="2007" name="Genome Biol.">
        <title>Interrupted coding sequences in Mycobacterium smegmatis: authentic mutations or sequencing errors?</title>
        <authorList>
            <person name="Deshayes C."/>
            <person name="Perrodou E."/>
            <person name="Gallien S."/>
            <person name="Euphrasie D."/>
            <person name="Schaeffer C."/>
            <person name="Van-Dorsselaer A."/>
            <person name="Poch O."/>
            <person name="Lecompte O."/>
            <person name="Reyrat J.-M."/>
        </authorList>
    </citation>
    <scope>NUCLEOTIDE SEQUENCE [LARGE SCALE GENOMIC DNA]</scope>
    <source>
        <strain>ATCC 700084 / mc(2)155</strain>
    </source>
</reference>
<reference key="3">
    <citation type="journal article" date="2009" name="Genome Res.">
        <title>Ortho-proteogenomics: multiple proteomes investigation through orthology and a new MS-based protocol.</title>
        <authorList>
            <person name="Gallien S."/>
            <person name="Perrodou E."/>
            <person name="Carapito C."/>
            <person name="Deshayes C."/>
            <person name="Reyrat J.-M."/>
            <person name="Van Dorsselaer A."/>
            <person name="Poch O."/>
            <person name="Schaeffer C."/>
            <person name="Lecompte O."/>
        </authorList>
    </citation>
    <scope>NUCLEOTIDE SEQUENCE [LARGE SCALE GENOMIC DNA]</scope>
    <source>
        <strain>ATCC 700084 / mc(2)155</strain>
    </source>
</reference>
<reference key="4">
    <citation type="journal article" date="2005" name="Nat. Struct. Mol. Biol.">
        <title>Mechanism of nonhomologous end-joining in mycobacteria: a low-fidelity repair system driven by Ku, ligase D and ligase C.</title>
        <authorList>
            <person name="Gong C."/>
            <person name="Bongiorno P."/>
            <person name="Martins A."/>
            <person name="Stephanou N.C."/>
            <person name="Zhu H."/>
            <person name="Shuman S."/>
            <person name="Glickman M.S."/>
        </authorList>
    </citation>
    <scope>DISRUPTION PHENOTYPE</scope>
    <source>
        <strain>ATCC 700084 / mc(2)155</strain>
    </source>
</reference>
<reference key="5">
    <citation type="journal article" date="2008" name="Genes Dev.">
        <title>The pathways and outcomes of mycobacterial NHEJ depend on the structure of the broken DNA ends.</title>
        <authorList>
            <person name="Aniukwu J."/>
            <person name="Glickman M.S."/>
            <person name="Shuman S."/>
        </authorList>
    </citation>
    <scope>FUNCTION</scope>
    <scope>DISRUPTION PHENOTYPE</scope>
    <source>
        <strain>ATCC 700084 / mc(2)155</strain>
    </source>
</reference>